<proteinExistence type="inferred from homology"/>
<gene>
    <name evidence="1" type="primary">fmt</name>
    <name type="ordered locus">Cgl1600</name>
    <name type="ordered locus">cg1803</name>
</gene>
<protein>
    <recommendedName>
        <fullName evidence="1">Methionyl-tRNA formyltransferase</fullName>
        <ecNumber evidence="1">2.1.2.9</ecNumber>
    </recommendedName>
</protein>
<dbReference type="EC" id="2.1.2.9" evidence="1"/>
<dbReference type="EMBL" id="BA000036">
    <property type="protein sequence ID" value="BAB98993.1"/>
    <property type="molecule type" value="Genomic_DNA"/>
</dbReference>
<dbReference type="EMBL" id="BX927152">
    <property type="protein sequence ID" value="CAF21608.1"/>
    <property type="molecule type" value="Genomic_DNA"/>
</dbReference>
<dbReference type="RefSeq" id="NP_600814.1">
    <property type="nucleotide sequence ID" value="NC_003450.3"/>
</dbReference>
<dbReference type="RefSeq" id="WP_003862229.1">
    <property type="nucleotide sequence ID" value="NC_006958.1"/>
</dbReference>
<dbReference type="SMR" id="Q8NQ47"/>
<dbReference type="STRING" id="196627.cg1803"/>
<dbReference type="GeneID" id="1019568"/>
<dbReference type="KEGG" id="cgb:cg1803"/>
<dbReference type="KEGG" id="cgl:Cgl1600"/>
<dbReference type="PATRIC" id="fig|196627.13.peg.1562"/>
<dbReference type="eggNOG" id="COG0223">
    <property type="taxonomic scope" value="Bacteria"/>
</dbReference>
<dbReference type="HOGENOM" id="CLU_033347_1_0_11"/>
<dbReference type="OrthoDB" id="9802815at2"/>
<dbReference type="BioCyc" id="CORYNE:G18NG-11185-MONOMER"/>
<dbReference type="Proteomes" id="UP000000582">
    <property type="component" value="Chromosome"/>
</dbReference>
<dbReference type="Proteomes" id="UP000001009">
    <property type="component" value="Chromosome"/>
</dbReference>
<dbReference type="GO" id="GO:0005829">
    <property type="term" value="C:cytosol"/>
    <property type="evidence" value="ECO:0007669"/>
    <property type="project" value="TreeGrafter"/>
</dbReference>
<dbReference type="GO" id="GO:0004479">
    <property type="term" value="F:methionyl-tRNA formyltransferase activity"/>
    <property type="evidence" value="ECO:0007669"/>
    <property type="project" value="UniProtKB-UniRule"/>
</dbReference>
<dbReference type="CDD" id="cd08646">
    <property type="entry name" value="FMT_core_Met-tRNA-FMT_N"/>
    <property type="match status" value="1"/>
</dbReference>
<dbReference type="CDD" id="cd08704">
    <property type="entry name" value="Met_tRNA_FMT_C"/>
    <property type="match status" value="1"/>
</dbReference>
<dbReference type="FunFam" id="3.40.50.12230:FF:000001">
    <property type="entry name" value="Methionyl-tRNA formyltransferase"/>
    <property type="match status" value="1"/>
</dbReference>
<dbReference type="Gene3D" id="3.40.50.12230">
    <property type="match status" value="1"/>
</dbReference>
<dbReference type="HAMAP" id="MF_00182">
    <property type="entry name" value="Formyl_trans"/>
    <property type="match status" value="1"/>
</dbReference>
<dbReference type="InterPro" id="IPR005794">
    <property type="entry name" value="Fmt"/>
</dbReference>
<dbReference type="InterPro" id="IPR005793">
    <property type="entry name" value="Formyl_trans_C"/>
</dbReference>
<dbReference type="InterPro" id="IPR002376">
    <property type="entry name" value="Formyl_transf_N"/>
</dbReference>
<dbReference type="InterPro" id="IPR036477">
    <property type="entry name" value="Formyl_transf_N_sf"/>
</dbReference>
<dbReference type="InterPro" id="IPR011034">
    <property type="entry name" value="Formyl_transferase-like_C_sf"/>
</dbReference>
<dbReference type="InterPro" id="IPR044135">
    <property type="entry name" value="Met-tRNA-FMT_C"/>
</dbReference>
<dbReference type="InterPro" id="IPR041711">
    <property type="entry name" value="Met-tRNA-FMT_N"/>
</dbReference>
<dbReference type="NCBIfam" id="TIGR00460">
    <property type="entry name" value="fmt"/>
    <property type="match status" value="1"/>
</dbReference>
<dbReference type="PANTHER" id="PTHR11138">
    <property type="entry name" value="METHIONYL-TRNA FORMYLTRANSFERASE"/>
    <property type="match status" value="1"/>
</dbReference>
<dbReference type="PANTHER" id="PTHR11138:SF5">
    <property type="entry name" value="METHIONYL-TRNA FORMYLTRANSFERASE, MITOCHONDRIAL"/>
    <property type="match status" value="1"/>
</dbReference>
<dbReference type="Pfam" id="PF02911">
    <property type="entry name" value="Formyl_trans_C"/>
    <property type="match status" value="1"/>
</dbReference>
<dbReference type="Pfam" id="PF00551">
    <property type="entry name" value="Formyl_trans_N"/>
    <property type="match status" value="1"/>
</dbReference>
<dbReference type="SUPFAM" id="SSF50486">
    <property type="entry name" value="FMT C-terminal domain-like"/>
    <property type="match status" value="1"/>
</dbReference>
<dbReference type="SUPFAM" id="SSF53328">
    <property type="entry name" value="Formyltransferase"/>
    <property type="match status" value="1"/>
</dbReference>
<organism>
    <name type="scientific">Corynebacterium glutamicum (strain ATCC 13032 / DSM 20300 / JCM 1318 / BCRC 11384 / CCUG 27702 / LMG 3730 / NBRC 12168 / NCIMB 10025 / NRRL B-2784 / 534)</name>
    <dbReference type="NCBI Taxonomy" id="196627"/>
    <lineage>
        <taxon>Bacteria</taxon>
        <taxon>Bacillati</taxon>
        <taxon>Actinomycetota</taxon>
        <taxon>Actinomycetes</taxon>
        <taxon>Mycobacteriales</taxon>
        <taxon>Corynebacteriaceae</taxon>
        <taxon>Corynebacterium</taxon>
    </lineage>
</organism>
<comment type="function">
    <text evidence="1">Attaches a formyl group to the free amino group of methionyl-tRNA(fMet). The formyl group appears to play a dual role in the initiator identity of N-formylmethionyl-tRNA by promoting its recognition by IF2 and preventing the misappropriation of this tRNA by the elongation apparatus.</text>
</comment>
<comment type="catalytic activity">
    <reaction evidence="1">
        <text>L-methionyl-tRNA(fMet) + (6R)-10-formyltetrahydrofolate = N-formyl-L-methionyl-tRNA(fMet) + (6S)-5,6,7,8-tetrahydrofolate + H(+)</text>
        <dbReference type="Rhea" id="RHEA:24380"/>
        <dbReference type="Rhea" id="RHEA-COMP:9952"/>
        <dbReference type="Rhea" id="RHEA-COMP:9953"/>
        <dbReference type="ChEBI" id="CHEBI:15378"/>
        <dbReference type="ChEBI" id="CHEBI:57453"/>
        <dbReference type="ChEBI" id="CHEBI:78530"/>
        <dbReference type="ChEBI" id="CHEBI:78844"/>
        <dbReference type="ChEBI" id="CHEBI:195366"/>
        <dbReference type="EC" id="2.1.2.9"/>
    </reaction>
</comment>
<comment type="similarity">
    <text evidence="1">Belongs to the Fmt family.</text>
</comment>
<reference key="1">
    <citation type="journal article" date="2003" name="Appl. Microbiol. Biotechnol.">
        <title>The Corynebacterium glutamicum genome: features and impacts on biotechnological processes.</title>
        <authorList>
            <person name="Ikeda M."/>
            <person name="Nakagawa S."/>
        </authorList>
    </citation>
    <scope>NUCLEOTIDE SEQUENCE [LARGE SCALE GENOMIC DNA]</scope>
    <source>
        <strain>ATCC 13032 / DSM 20300 / JCM 1318 / BCRC 11384 / CCUG 27702 / LMG 3730 / NBRC 12168 / NCIMB 10025 / NRRL B-2784 / 534</strain>
    </source>
</reference>
<reference key="2">
    <citation type="journal article" date="2003" name="J. Biotechnol.">
        <title>The complete Corynebacterium glutamicum ATCC 13032 genome sequence and its impact on the production of L-aspartate-derived amino acids and vitamins.</title>
        <authorList>
            <person name="Kalinowski J."/>
            <person name="Bathe B."/>
            <person name="Bartels D."/>
            <person name="Bischoff N."/>
            <person name="Bott M."/>
            <person name="Burkovski A."/>
            <person name="Dusch N."/>
            <person name="Eggeling L."/>
            <person name="Eikmanns B.J."/>
            <person name="Gaigalat L."/>
            <person name="Goesmann A."/>
            <person name="Hartmann M."/>
            <person name="Huthmacher K."/>
            <person name="Kraemer R."/>
            <person name="Linke B."/>
            <person name="McHardy A.C."/>
            <person name="Meyer F."/>
            <person name="Moeckel B."/>
            <person name="Pfefferle W."/>
            <person name="Puehler A."/>
            <person name="Rey D.A."/>
            <person name="Rueckert C."/>
            <person name="Rupp O."/>
            <person name="Sahm H."/>
            <person name="Wendisch V.F."/>
            <person name="Wiegraebe I."/>
            <person name="Tauch A."/>
        </authorList>
    </citation>
    <scope>NUCLEOTIDE SEQUENCE [LARGE SCALE GENOMIC DNA]</scope>
    <source>
        <strain>ATCC 13032 / DSM 20300 / JCM 1318 / BCRC 11384 / CCUG 27702 / LMG 3730 / NBRC 12168 / NCIMB 10025 / NRRL B-2784 / 534</strain>
    </source>
</reference>
<feature type="chain" id="PRO_0000082954" description="Methionyl-tRNA formyltransferase">
    <location>
        <begin position="1"/>
        <end position="315"/>
    </location>
</feature>
<feature type="binding site" evidence="1">
    <location>
        <begin position="114"/>
        <end position="117"/>
    </location>
    <ligand>
        <name>(6S)-5,6,7,8-tetrahydrofolate</name>
        <dbReference type="ChEBI" id="CHEBI:57453"/>
    </ligand>
</feature>
<keyword id="KW-0648">Protein biosynthesis</keyword>
<keyword id="KW-1185">Reference proteome</keyword>
<keyword id="KW-0808">Transferase</keyword>
<accession>Q8NQ47</accession>
<name>FMT_CORGL</name>
<evidence type="ECO:0000255" key="1">
    <source>
        <dbReference type="HAMAP-Rule" id="MF_00182"/>
    </source>
</evidence>
<sequence length="315" mass="33590">MRLVFAGTPEPAVVALQKLIDSDHEVVAVLTQPDARRGRGRTLHPSAVAELAQQHGIEVLKPTSLKADTEDGQAIRQRLAELAPDCLPVVAYGQLITKDLLDVAPHGWVNLHFSLLPAWRGAAPVQASIREGDQITGATTFRIDEGLDTGVILSTIEDTIQPTDTADDLLTRLAYSGGDLLVETMTGLEQGTITPRAQEGEATYASKITTQDAQIDWSKPAEVIDRHIRAHTPGPGAWTTLVDARLKVGPISHSGEVEVAADLAPGAILAQKNSVVVGTGTTPIVLGNIQPPGKKMMNAADWARGVQLDQEAKFQ</sequence>